<sequence>MAKIRIHEIAKELGYDSKEIIEKANELGLGIKTASNAVEPEIAAAIYEYIQTREIPEAFKKNIKTPTAKKPKKENIKEQEKLNESEKKEPKKEEKLKQEVKKEELKVEKENVKEEEKQEIIDAHKPQSLASATLAKRRGLVIVKKKKDEEEIQVKKEEVKNSNDISINNEERLSLKTMFSNADESLKKKKKEKKSFVASKKESTEKMNFLDEHDFGDISLDDEDEVVLPDFSVKEQEKPQNINKKQPNFIRQAVGNSAGFGLEGGIQRRSRKKPPKKIEKKEVEEVSSVAISKEIRVYEFADKIGKSTSEVISKLFMLGMMTTKNDFLDEDAIEILAAEFGIEINIINEADEFDYVKDYEEETDEKDLVTRAPVITIMGHVDHGKTSLLDYIRKSRVASGEAGGITQHVGAYMVEKNGRKITFIDTPGHEAFTAMRARGASITDIVIIVVAADDGVKPQTKEAINHAKAAGVPIIIAINKMDKEAANPDMVKTQLAEMEIMPVEWGGSYEFVGVSAKTGMGIEDLLEIVLLQADILELKANPKSFAKASIIESSVQKGRGAVATIIVQNGTLTVGSTVVAGEAYGKVRAMSDDQGKALKEIKPGECGVIVGLSEVADAGEILIAVKTDKEAREYANKRHEYNRQKELSKSTKVSIDELGAKIKEGNLKALPVILKADVQGSLEALKASLEKLRNDEIKVNIIHSGVGGITQSDIELASASENSIVLGFNIRPTGEVKERAKDKGVEIKTYNVIYNLLDDVKALLGGMMSPIISEEQLGQAEIRQVINVPKIGQIAGCMVTEGVINRGAKIRLIRDGVVVYEGNVSSLKRFKDDAKEVAKGYECGVGIEGCDDMRVGDYIESYKEVEEQASL</sequence>
<protein>
    <recommendedName>
        <fullName evidence="2">Translation initiation factor IF-2</fullName>
    </recommendedName>
</protein>
<evidence type="ECO:0000250" key="1"/>
<evidence type="ECO:0000255" key="2">
    <source>
        <dbReference type="HAMAP-Rule" id="MF_00100"/>
    </source>
</evidence>
<evidence type="ECO:0000256" key="3">
    <source>
        <dbReference type="SAM" id="MobiDB-lite"/>
    </source>
</evidence>
<accession>A8FJU1</accession>
<keyword id="KW-0963">Cytoplasm</keyword>
<keyword id="KW-0342">GTP-binding</keyword>
<keyword id="KW-0396">Initiation factor</keyword>
<keyword id="KW-0547">Nucleotide-binding</keyword>
<keyword id="KW-0648">Protein biosynthesis</keyword>
<reference key="1">
    <citation type="journal article" date="2007" name="J. Bacteriol.">
        <title>The complete genome sequence of Campylobacter jejuni strain 81116 (NCTC11828).</title>
        <authorList>
            <person name="Pearson B.M."/>
            <person name="Gaskin D.J.H."/>
            <person name="Segers R.P.A.M."/>
            <person name="Wells J.M."/>
            <person name="Nuijten P.J.M."/>
            <person name="van Vliet A.H.M."/>
        </authorList>
    </citation>
    <scope>NUCLEOTIDE SEQUENCE [LARGE SCALE GENOMIC DNA]</scope>
    <source>
        <strain>81116 / NCTC 11828</strain>
    </source>
</reference>
<proteinExistence type="inferred from homology"/>
<organism>
    <name type="scientific">Campylobacter jejuni subsp. jejuni serotype O:6 (strain 81116 / NCTC 11828)</name>
    <dbReference type="NCBI Taxonomy" id="407148"/>
    <lineage>
        <taxon>Bacteria</taxon>
        <taxon>Pseudomonadati</taxon>
        <taxon>Campylobacterota</taxon>
        <taxon>Epsilonproteobacteria</taxon>
        <taxon>Campylobacterales</taxon>
        <taxon>Campylobacteraceae</taxon>
        <taxon>Campylobacter</taxon>
    </lineage>
</organism>
<gene>
    <name evidence="2" type="primary">infB</name>
    <name type="ordered locus">C8J_0129</name>
</gene>
<dbReference type="EMBL" id="CP000814">
    <property type="protein sequence ID" value="ABV51728.1"/>
    <property type="molecule type" value="Genomic_DNA"/>
</dbReference>
<dbReference type="RefSeq" id="WP_002893398.1">
    <property type="nucleotide sequence ID" value="NC_009839.1"/>
</dbReference>
<dbReference type="SMR" id="A8FJU1"/>
<dbReference type="KEGG" id="cju:C8J_0129"/>
<dbReference type="HOGENOM" id="CLU_006301_4_1_7"/>
<dbReference type="GO" id="GO:0005829">
    <property type="term" value="C:cytosol"/>
    <property type="evidence" value="ECO:0007669"/>
    <property type="project" value="TreeGrafter"/>
</dbReference>
<dbReference type="GO" id="GO:0005525">
    <property type="term" value="F:GTP binding"/>
    <property type="evidence" value="ECO:0007669"/>
    <property type="project" value="UniProtKB-KW"/>
</dbReference>
<dbReference type="GO" id="GO:0003924">
    <property type="term" value="F:GTPase activity"/>
    <property type="evidence" value="ECO:0007669"/>
    <property type="project" value="UniProtKB-UniRule"/>
</dbReference>
<dbReference type="GO" id="GO:0003743">
    <property type="term" value="F:translation initiation factor activity"/>
    <property type="evidence" value="ECO:0007669"/>
    <property type="project" value="UniProtKB-UniRule"/>
</dbReference>
<dbReference type="CDD" id="cd01887">
    <property type="entry name" value="IF2_eIF5B"/>
    <property type="match status" value="1"/>
</dbReference>
<dbReference type="CDD" id="cd03702">
    <property type="entry name" value="IF2_mtIF2_II"/>
    <property type="match status" value="1"/>
</dbReference>
<dbReference type="CDD" id="cd03692">
    <property type="entry name" value="mtIF2_IVc"/>
    <property type="match status" value="1"/>
</dbReference>
<dbReference type="FunFam" id="2.40.30.10:FF:000008">
    <property type="entry name" value="Translation initiation factor IF-2"/>
    <property type="match status" value="1"/>
</dbReference>
<dbReference type="FunFam" id="2.40.30.10:FF:000054">
    <property type="entry name" value="Translation initiation factor IF-2"/>
    <property type="match status" value="1"/>
</dbReference>
<dbReference type="FunFam" id="3.40.50.10050:FF:000001">
    <property type="entry name" value="Translation initiation factor IF-2"/>
    <property type="match status" value="1"/>
</dbReference>
<dbReference type="FunFam" id="3.40.50.300:FF:000019">
    <property type="entry name" value="Translation initiation factor IF-2"/>
    <property type="match status" value="1"/>
</dbReference>
<dbReference type="Gene3D" id="1.10.10.2480">
    <property type="match status" value="1"/>
</dbReference>
<dbReference type="Gene3D" id="3.40.50.300">
    <property type="entry name" value="P-loop containing nucleotide triphosphate hydrolases"/>
    <property type="match status" value="1"/>
</dbReference>
<dbReference type="Gene3D" id="2.40.30.10">
    <property type="entry name" value="Translation factors"/>
    <property type="match status" value="2"/>
</dbReference>
<dbReference type="Gene3D" id="3.40.50.10050">
    <property type="entry name" value="Translation initiation factor IF- 2, domain 3"/>
    <property type="match status" value="1"/>
</dbReference>
<dbReference type="HAMAP" id="MF_00100_B">
    <property type="entry name" value="IF_2_B"/>
    <property type="match status" value="1"/>
</dbReference>
<dbReference type="InterPro" id="IPR053905">
    <property type="entry name" value="EF-G-like_DII"/>
</dbReference>
<dbReference type="InterPro" id="IPR004161">
    <property type="entry name" value="EFTu-like_2"/>
</dbReference>
<dbReference type="InterPro" id="IPR044145">
    <property type="entry name" value="IF2_II"/>
</dbReference>
<dbReference type="InterPro" id="IPR006847">
    <property type="entry name" value="IF2_N"/>
</dbReference>
<dbReference type="InterPro" id="IPR027417">
    <property type="entry name" value="P-loop_NTPase"/>
</dbReference>
<dbReference type="InterPro" id="IPR005225">
    <property type="entry name" value="Small_GTP-bd"/>
</dbReference>
<dbReference type="InterPro" id="IPR000795">
    <property type="entry name" value="T_Tr_GTP-bd_dom"/>
</dbReference>
<dbReference type="InterPro" id="IPR000178">
    <property type="entry name" value="TF_IF2_bacterial-like"/>
</dbReference>
<dbReference type="InterPro" id="IPR015760">
    <property type="entry name" value="TIF_IF2"/>
</dbReference>
<dbReference type="InterPro" id="IPR023115">
    <property type="entry name" value="TIF_IF2_dom3"/>
</dbReference>
<dbReference type="InterPro" id="IPR036925">
    <property type="entry name" value="TIF_IF2_dom3_sf"/>
</dbReference>
<dbReference type="InterPro" id="IPR009000">
    <property type="entry name" value="Transl_B-barrel_sf"/>
</dbReference>
<dbReference type="NCBIfam" id="TIGR00487">
    <property type="entry name" value="IF-2"/>
    <property type="match status" value="1"/>
</dbReference>
<dbReference type="NCBIfam" id="TIGR00231">
    <property type="entry name" value="small_GTP"/>
    <property type="match status" value="1"/>
</dbReference>
<dbReference type="PANTHER" id="PTHR43381:SF5">
    <property type="entry name" value="TR-TYPE G DOMAIN-CONTAINING PROTEIN"/>
    <property type="match status" value="1"/>
</dbReference>
<dbReference type="PANTHER" id="PTHR43381">
    <property type="entry name" value="TRANSLATION INITIATION FACTOR IF-2-RELATED"/>
    <property type="match status" value="1"/>
</dbReference>
<dbReference type="Pfam" id="PF22042">
    <property type="entry name" value="EF-G_D2"/>
    <property type="match status" value="1"/>
</dbReference>
<dbReference type="Pfam" id="PF00009">
    <property type="entry name" value="GTP_EFTU"/>
    <property type="match status" value="1"/>
</dbReference>
<dbReference type="Pfam" id="PF03144">
    <property type="entry name" value="GTP_EFTU_D2"/>
    <property type="match status" value="1"/>
</dbReference>
<dbReference type="Pfam" id="PF11987">
    <property type="entry name" value="IF-2"/>
    <property type="match status" value="1"/>
</dbReference>
<dbReference type="Pfam" id="PF04760">
    <property type="entry name" value="IF2_N"/>
    <property type="match status" value="2"/>
</dbReference>
<dbReference type="SUPFAM" id="SSF52156">
    <property type="entry name" value="Initiation factor IF2/eIF5b, domain 3"/>
    <property type="match status" value="1"/>
</dbReference>
<dbReference type="SUPFAM" id="SSF52540">
    <property type="entry name" value="P-loop containing nucleoside triphosphate hydrolases"/>
    <property type="match status" value="1"/>
</dbReference>
<dbReference type="SUPFAM" id="SSF50447">
    <property type="entry name" value="Translation proteins"/>
    <property type="match status" value="2"/>
</dbReference>
<dbReference type="PROSITE" id="PS51722">
    <property type="entry name" value="G_TR_2"/>
    <property type="match status" value="1"/>
</dbReference>
<dbReference type="PROSITE" id="PS01176">
    <property type="entry name" value="IF2"/>
    <property type="match status" value="1"/>
</dbReference>
<feature type="chain" id="PRO_1000071287" description="Translation initiation factor IF-2">
    <location>
        <begin position="1"/>
        <end position="871"/>
    </location>
</feature>
<feature type="domain" description="tr-type G">
    <location>
        <begin position="370"/>
        <end position="537"/>
    </location>
</feature>
<feature type="region of interest" description="Disordered" evidence="3">
    <location>
        <begin position="60"/>
        <end position="101"/>
    </location>
</feature>
<feature type="region of interest" description="Disordered" evidence="3">
    <location>
        <begin position="184"/>
        <end position="203"/>
    </location>
</feature>
<feature type="region of interest" description="G1" evidence="1">
    <location>
        <begin position="379"/>
        <end position="386"/>
    </location>
</feature>
<feature type="region of interest" description="G2" evidence="1">
    <location>
        <begin position="404"/>
        <end position="408"/>
    </location>
</feature>
<feature type="region of interest" description="G3" evidence="1">
    <location>
        <begin position="425"/>
        <end position="428"/>
    </location>
</feature>
<feature type="region of interest" description="G4" evidence="1">
    <location>
        <begin position="479"/>
        <end position="482"/>
    </location>
</feature>
<feature type="region of interest" description="G5" evidence="1">
    <location>
        <begin position="515"/>
        <end position="517"/>
    </location>
</feature>
<feature type="compositionally biased region" description="Basic residues" evidence="3">
    <location>
        <begin position="61"/>
        <end position="72"/>
    </location>
</feature>
<feature type="compositionally biased region" description="Basic and acidic residues" evidence="3">
    <location>
        <begin position="73"/>
        <end position="101"/>
    </location>
</feature>
<feature type="binding site" evidence="2">
    <location>
        <begin position="379"/>
        <end position="386"/>
    </location>
    <ligand>
        <name>GTP</name>
        <dbReference type="ChEBI" id="CHEBI:37565"/>
    </ligand>
</feature>
<feature type="binding site" evidence="2">
    <location>
        <begin position="425"/>
        <end position="429"/>
    </location>
    <ligand>
        <name>GTP</name>
        <dbReference type="ChEBI" id="CHEBI:37565"/>
    </ligand>
</feature>
<feature type="binding site" evidence="2">
    <location>
        <begin position="479"/>
        <end position="482"/>
    </location>
    <ligand>
        <name>GTP</name>
        <dbReference type="ChEBI" id="CHEBI:37565"/>
    </ligand>
</feature>
<comment type="function">
    <text evidence="2">One of the essential components for the initiation of protein synthesis. Protects formylmethionyl-tRNA from spontaneous hydrolysis and promotes its binding to the 30S ribosomal subunits. Also involved in the hydrolysis of GTP during the formation of the 70S ribosomal complex.</text>
</comment>
<comment type="subcellular location">
    <subcellularLocation>
        <location evidence="2">Cytoplasm</location>
    </subcellularLocation>
</comment>
<comment type="similarity">
    <text evidence="2">Belongs to the TRAFAC class translation factor GTPase superfamily. Classic translation factor GTPase family. IF-2 subfamily.</text>
</comment>
<name>IF2_CAMJ8</name>